<gene>
    <name type="primary">S1FA2</name>
    <name type="ordered locus">At2g37120</name>
    <name type="ORF">T2N18.12</name>
</gene>
<evidence type="ECO:0000250" key="1"/>
<evidence type="ECO:0000255" key="2"/>
<evidence type="ECO:0000256" key="3">
    <source>
        <dbReference type="SAM" id="MobiDB-lite"/>
    </source>
</evidence>
<evidence type="ECO:0000305" key="4"/>
<sequence>MSSDGSAGKAVVEAKGLNPGLIVLLVIGGLLVTFLIANYVMYMYAQKNLPPRKKKPLSKKKLKREKLKQGVPVPGE</sequence>
<protein>
    <recommendedName>
        <fullName>DNA-binding protein S1FA2</fullName>
    </recommendedName>
</protein>
<reference key="1">
    <citation type="journal article" date="1999" name="Nature">
        <title>Sequence and analysis of chromosome 2 of the plant Arabidopsis thaliana.</title>
        <authorList>
            <person name="Lin X."/>
            <person name="Kaul S."/>
            <person name="Rounsley S.D."/>
            <person name="Shea T.P."/>
            <person name="Benito M.-I."/>
            <person name="Town C.D."/>
            <person name="Fujii C.Y."/>
            <person name="Mason T.M."/>
            <person name="Bowman C.L."/>
            <person name="Barnstead M.E."/>
            <person name="Feldblyum T.V."/>
            <person name="Buell C.R."/>
            <person name="Ketchum K.A."/>
            <person name="Lee J.J."/>
            <person name="Ronning C.M."/>
            <person name="Koo H.L."/>
            <person name="Moffat K.S."/>
            <person name="Cronin L.A."/>
            <person name="Shen M."/>
            <person name="Pai G."/>
            <person name="Van Aken S."/>
            <person name="Umayam L."/>
            <person name="Tallon L.J."/>
            <person name="Gill J.E."/>
            <person name="Adams M.D."/>
            <person name="Carrera A.J."/>
            <person name="Creasy T.H."/>
            <person name="Goodman H.M."/>
            <person name="Somerville C.R."/>
            <person name="Copenhaver G.P."/>
            <person name="Preuss D."/>
            <person name="Nierman W.C."/>
            <person name="White O."/>
            <person name="Eisen J.A."/>
            <person name="Salzberg S.L."/>
            <person name="Fraser C.M."/>
            <person name="Venter J.C."/>
        </authorList>
    </citation>
    <scope>NUCLEOTIDE SEQUENCE [LARGE SCALE GENOMIC DNA]</scope>
    <source>
        <strain>cv. Columbia</strain>
    </source>
</reference>
<reference key="2">
    <citation type="journal article" date="2017" name="Plant J.">
        <title>Araport11: a complete reannotation of the Arabidopsis thaliana reference genome.</title>
        <authorList>
            <person name="Cheng C.Y."/>
            <person name="Krishnakumar V."/>
            <person name="Chan A.P."/>
            <person name="Thibaud-Nissen F."/>
            <person name="Schobel S."/>
            <person name="Town C.D."/>
        </authorList>
    </citation>
    <scope>GENOME REANNOTATION</scope>
    <source>
        <strain>cv. Columbia</strain>
    </source>
</reference>
<reference key="3">
    <citation type="journal article" date="2003" name="Science">
        <title>Empirical analysis of transcriptional activity in the Arabidopsis genome.</title>
        <authorList>
            <person name="Yamada K."/>
            <person name="Lim J."/>
            <person name="Dale J.M."/>
            <person name="Chen H."/>
            <person name="Shinn P."/>
            <person name="Palm C.J."/>
            <person name="Southwick A.M."/>
            <person name="Wu H.C."/>
            <person name="Kim C.J."/>
            <person name="Nguyen M."/>
            <person name="Pham P.K."/>
            <person name="Cheuk R.F."/>
            <person name="Karlin-Newmann G."/>
            <person name="Liu S.X."/>
            <person name="Lam B."/>
            <person name="Sakano H."/>
            <person name="Wu T."/>
            <person name="Yu G."/>
            <person name="Miranda M."/>
            <person name="Quach H.L."/>
            <person name="Tripp M."/>
            <person name="Chang C.H."/>
            <person name="Lee J.M."/>
            <person name="Toriumi M.J."/>
            <person name="Chan M.M."/>
            <person name="Tang C.C."/>
            <person name="Onodera C.S."/>
            <person name="Deng J.M."/>
            <person name="Akiyama K."/>
            <person name="Ansari Y."/>
            <person name="Arakawa T."/>
            <person name="Banh J."/>
            <person name="Banno F."/>
            <person name="Bowser L."/>
            <person name="Brooks S.Y."/>
            <person name="Carninci P."/>
            <person name="Chao Q."/>
            <person name="Choy N."/>
            <person name="Enju A."/>
            <person name="Goldsmith A.D."/>
            <person name="Gurjal M."/>
            <person name="Hansen N.F."/>
            <person name="Hayashizaki Y."/>
            <person name="Johnson-Hopson C."/>
            <person name="Hsuan V.W."/>
            <person name="Iida K."/>
            <person name="Karnes M."/>
            <person name="Khan S."/>
            <person name="Koesema E."/>
            <person name="Ishida J."/>
            <person name="Jiang P.X."/>
            <person name="Jones T."/>
            <person name="Kawai J."/>
            <person name="Kamiya A."/>
            <person name="Meyers C."/>
            <person name="Nakajima M."/>
            <person name="Narusaka M."/>
            <person name="Seki M."/>
            <person name="Sakurai T."/>
            <person name="Satou M."/>
            <person name="Tamse R."/>
            <person name="Vaysberg M."/>
            <person name="Wallender E.K."/>
            <person name="Wong C."/>
            <person name="Yamamura Y."/>
            <person name="Yuan S."/>
            <person name="Shinozaki K."/>
            <person name="Davis R.W."/>
            <person name="Theologis A."/>
            <person name="Ecker J.R."/>
        </authorList>
    </citation>
    <scope>NUCLEOTIDE SEQUENCE [LARGE SCALE MRNA]</scope>
    <source>
        <strain>cv. Columbia</strain>
    </source>
</reference>
<reference key="4">
    <citation type="submission" date="2002-03" db="EMBL/GenBank/DDBJ databases">
        <title>Full-length cDNA from Arabidopsis thaliana.</title>
        <authorList>
            <person name="Brover V.V."/>
            <person name="Troukhan M.E."/>
            <person name="Alexandrov N.A."/>
            <person name="Lu Y.-P."/>
            <person name="Flavell R.B."/>
            <person name="Feldmann K.A."/>
        </authorList>
    </citation>
    <scope>NUCLEOTIDE SEQUENCE [LARGE SCALE MRNA]</scope>
</reference>
<reference key="5">
    <citation type="journal article" date="1996" name="Plant J.">
        <title>Further progress towards a catalogue of all Arabidopsis genes: analysis of a set of 5000 non-redundant ESTs.</title>
        <authorList>
            <person name="Cooke R."/>
            <person name="Raynal M."/>
            <person name="Laudie M."/>
            <person name="Grellet F."/>
            <person name="Delseny M."/>
            <person name="Morris P.-C."/>
            <person name="Guerrier D."/>
            <person name="Giraudat J."/>
            <person name="Quigley F."/>
            <person name="Clabault G."/>
            <person name="Li Y.-F."/>
            <person name="Mache R."/>
            <person name="Krivitzky M."/>
            <person name="Gy I.J.-J."/>
            <person name="Kreis M."/>
            <person name="Lecharny A."/>
            <person name="Parmentier Y."/>
            <person name="Marbach J."/>
            <person name="Fleck J."/>
            <person name="Clement B."/>
            <person name="Philipps G."/>
            <person name="Herve C."/>
            <person name="Bardet C."/>
            <person name="Tremousaygue D."/>
            <person name="Lescure B."/>
            <person name="Lacomme C."/>
            <person name="Roby D."/>
            <person name="Jourjon M.-F."/>
            <person name="Chabrier P."/>
            <person name="Charpenteau J.-L."/>
            <person name="Desprez T."/>
            <person name="Amselem J."/>
            <person name="Chiapello H."/>
            <person name="Hoefte H."/>
        </authorList>
    </citation>
    <scope>NUCLEOTIDE SEQUENCE [LARGE SCALE MRNA]</scope>
    <source>
        <strain>cv. Columbia</strain>
    </source>
</reference>
<keyword id="KW-0238">DNA-binding</keyword>
<keyword id="KW-0539">Nucleus</keyword>
<keyword id="KW-1185">Reference proteome</keyword>
<keyword id="KW-0678">Repressor</keyword>
<keyword id="KW-0804">Transcription</keyword>
<keyword id="KW-0805">Transcription regulation</keyword>
<accession>Q42337</accession>
<accession>Q9ZQC9</accession>
<dbReference type="EMBL" id="AC006260">
    <property type="protein sequence ID" value="AAD18147.1"/>
    <property type="molecule type" value="Genomic_DNA"/>
</dbReference>
<dbReference type="EMBL" id="CP002685">
    <property type="protein sequence ID" value="AEC09353.1"/>
    <property type="molecule type" value="Genomic_DNA"/>
</dbReference>
<dbReference type="EMBL" id="AF372892">
    <property type="protein sequence ID" value="AAK49608.1"/>
    <property type="molecule type" value="mRNA"/>
</dbReference>
<dbReference type="EMBL" id="BT002669">
    <property type="protein sequence ID" value="AAO11585.1"/>
    <property type="molecule type" value="mRNA"/>
</dbReference>
<dbReference type="EMBL" id="AY085439">
    <property type="protein sequence ID" value="AAM62666.1"/>
    <property type="molecule type" value="mRNA"/>
</dbReference>
<dbReference type="EMBL" id="F19912">
    <property type="protein sequence ID" value="CAA23370.1"/>
    <property type="molecule type" value="mRNA"/>
</dbReference>
<dbReference type="PIR" id="G84788">
    <property type="entry name" value="G84788"/>
</dbReference>
<dbReference type="RefSeq" id="NP_565859.1">
    <property type="nucleotide sequence ID" value="NM_129268.4"/>
</dbReference>
<dbReference type="SMR" id="Q42337"/>
<dbReference type="BioGRID" id="3632">
    <property type="interactions" value="7"/>
</dbReference>
<dbReference type="FunCoup" id="Q42337">
    <property type="interactions" value="2"/>
</dbReference>
<dbReference type="IntAct" id="Q42337">
    <property type="interactions" value="6"/>
</dbReference>
<dbReference type="STRING" id="3702.Q42337"/>
<dbReference type="iPTMnet" id="Q42337"/>
<dbReference type="PaxDb" id="3702-AT2G37120.1"/>
<dbReference type="ProteomicsDB" id="228045"/>
<dbReference type="EnsemblPlants" id="AT2G37120.1">
    <property type="protein sequence ID" value="AT2G37120.1"/>
    <property type="gene ID" value="AT2G37120"/>
</dbReference>
<dbReference type="GeneID" id="818288"/>
<dbReference type="Gramene" id="AT2G37120.1">
    <property type="protein sequence ID" value="AT2G37120.1"/>
    <property type="gene ID" value="AT2G37120"/>
</dbReference>
<dbReference type="KEGG" id="ath:AT2G37120"/>
<dbReference type="Araport" id="AT2G37120"/>
<dbReference type="TAIR" id="AT2G37120"/>
<dbReference type="eggNOG" id="ENOG502S3X9">
    <property type="taxonomic scope" value="Eukaryota"/>
</dbReference>
<dbReference type="HOGENOM" id="CLU_172811_0_0_1"/>
<dbReference type="InParanoid" id="Q42337"/>
<dbReference type="OMA" id="ANYVMYM"/>
<dbReference type="PRO" id="PR:Q42337"/>
<dbReference type="Proteomes" id="UP000006548">
    <property type="component" value="Chromosome 2"/>
</dbReference>
<dbReference type="ExpressionAtlas" id="Q42337">
    <property type="expression patterns" value="baseline and differential"/>
</dbReference>
<dbReference type="GO" id="GO:0005634">
    <property type="term" value="C:nucleus"/>
    <property type="evidence" value="ECO:0007669"/>
    <property type="project" value="UniProtKB-SubCell"/>
</dbReference>
<dbReference type="GO" id="GO:0003677">
    <property type="term" value="F:DNA binding"/>
    <property type="evidence" value="ECO:0007669"/>
    <property type="project" value="UniProtKB-KW"/>
</dbReference>
<dbReference type="GO" id="GO:0006355">
    <property type="term" value="P:regulation of DNA-templated transcription"/>
    <property type="evidence" value="ECO:0007669"/>
    <property type="project" value="InterPro"/>
</dbReference>
<dbReference type="InterPro" id="IPR006779">
    <property type="entry name" value="S1FA_DNA-bd"/>
</dbReference>
<dbReference type="PANTHER" id="PTHR35298:SF11">
    <property type="entry name" value="DNA-BINDING PROTEIN S1FA1-RELATED"/>
    <property type="match status" value="1"/>
</dbReference>
<dbReference type="PANTHER" id="PTHR35298">
    <property type="entry name" value="DNA-BINDING PROTEIN S1FA2"/>
    <property type="match status" value="1"/>
</dbReference>
<dbReference type="Pfam" id="PF04689">
    <property type="entry name" value="S1FA"/>
    <property type="match status" value="1"/>
</dbReference>
<feature type="chain" id="PRO_0000132714" description="DNA-binding protein S1FA2">
    <location>
        <begin position="1"/>
        <end position="76"/>
    </location>
</feature>
<feature type="region of interest" description="Disordered" evidence="3">
    <location>
        <begin position="51"/>
        <end position="76"/>
    </location>
</feature>
<feature type="short sequence motif" description="Nuclear localization signal" evidence="2">
    <location>
        <begin position="50"/>
        <end position="55"/>
    </location>
</feature>
<feature type="compositionally biased region" description="Basic residues" evidence="3">
    <location>
        <begin position="51"/>
        <end position="66"/>
    </location>
</feature>
<feature type="sequence conflict" description="In Ref. 5; CAA23370." evidence="4" ref="5">
    <original>G</original>
    <variation>R</variation>
    <location>
        <position position="70"/>
    </location>
</feature>
<comment type="function">
    <text evidence="1">DNA-binding protein that specifically recognizes a negative element (S1F) within the RPS1 promoter.</text>
</comment>
<comment type="subcellular location">
    <subcellularLocation>
        <location evidence="4">Nucleus</location>
    </subcellularLocation>
</comment>
<comment type="similarity">
    <text evidence="4">Belongs to the S1FA transcription factor family.</text>
</comment>
<proteinExistence type="inferred from homology"/>
<organism>
    <name type="scientific">Arabidopsis thaliana</name>
    <name type="common">Mouse-ear cress</name>
    <dbReference type="NCBI Taxonomy" id="3702"/>
    <lineage>
        <taxon>Eukaryota</taxon>
        <taxon>Viridiplantae</taxon>
        <taxon>Streptophyta</taxon>
        <taxon>Embryophyta</taxon>
        <taxon>Tracheophyta</taxon>
        <taxon>Spermatophyta</taxon>
        <taxon>Magnoliopsida</taxon>
        <taxon>eudicotyledons</taxon>
        <taxon>Gunneridae</taxon>
        <taxon>Pentapetalae</taxon>
        <taxon>rosids</taxon>
        <taxon>malvids</taxon>
        <taxon>Brassicales</taxon>
        <taxon>Brassicaceae</taxon>
        <taxon>Camelineae</taxon>
        <taxon>Arabidopsis</taxon>
    </lineage>
</organism>
<name>S1FA2_ARATH</name>